<feature type="chain" id="PRO_0000070226" description="Putative G-protein coupled receptor F59B2.13">
    <location>
        <begin position="1"/>
        <end position="428"/>
    </location>
</feature>
<feature type="topological domain" description="Extracellular" evidence="1">
    <location>
        <begin position="1"/>
        <end position="30"/>
    </location>
</feature>
<feature type="transmembrane region" description="Helical; Name=1" evidence="1">
    <location>
        <begin position="31"/>
        <end position="51"/>
    </location>
</feature>
<feature type="topological domain" description="Cytoplasmic" evidence="1">
    <location>
        <begin position="52"/>
        <end position="67"/>
    </location>
</feature>
<feature type="transmembrane region" description="Helical; Name=2" evidence="1">
    <location>
        <begin position="68"/>
        <end position="88"/>
    </location>
</feature>
<feature type="topological domain" description="Extracellular" evidence="1">
    <location>
        <begin position="89"/>
        <end position="110"/>
    </location>
</feature>
<feature type="transmembrane region" description="Helical; Name=3" evidence="1">
    <location>
        <begin position="111"/>
        <end position="131"/>
    </location>
</feature>
<feature type="topological domain" description="Cytoplasmic" evidence="1">
    <location>
        <begin position="132"/>
        <end position="154"/>
    </location>
</feature>
<feature type="transmembrane region" description="Helical; Name=4" evidence="1">
    <location>
        <begin position="155"/>
        <end position="175"/>
    </location>
</feature>
<feature type="topological domain" description="Extracellular" evidence="1">
    <location>
        <begin position="176"/>
        <end position="222"/>
    </location>
</feature>
<feature type="transmembrane region" description="Helical; Name=5" evidence="1">
    <location>
        <begin position="223"/>
        <end position="243"/>
    </location>
</feature>
<feature type="topological domain" description="Cytoplasmic" evidence="1">
    <location>
        <begin position="244"/>
        <end position="278"/>
    </location>
</feature>
<feature type="transmembrane region" description="Helical; Name=6" evidence="1">
    <location>
        <begin position="279"/>
        <end position="299"/>
    </location>
</feature>
<feature type="topological domain" description="Extracellular" evidence="1">
    <location>
        <begin position="300"/>
        <end position="309"/>
    </location>
</feature>
<feature type="transmembrane region" description="Helical; Name=7" evidence="1">
    <location>
        <begin position="310"/>
        <end position="330"/>
    </location>
</feature>
<feature type="topological domain" description="Cytoplasmic" evidence="1">
    <location>
        <begin position="331"/>
        <end position="428"/>
    </location>
</feature>
<feature type="glycosylation site" description="N-linked (GlcNAc...) asparagine" evidence="1">
    <location>
        <position position="3"/>
    </location>
</feature>
<feature type="glycosylation site" description="N-linked (GlcNAc...) asparagine" evidence="1">
    <location>
        <position position="4"/>
    </location>
</feature>
<feature type="glycosylation site" description="N-linked (GlcNAc...) asparagine" evidence="1">
    <location>
        <position position="183"/>
    </location>
</feature>
<accession>P34488</accession>
<sequence length="428" mass="47996">MSNNTTIPSKTATDICLTDRQMSLSVSSTEGVLIGTIIPILVLFGISGNILNLTVLLAPNLRTRSNQLLACLAVADIVSLVVILPHSMAHYETFETALWFRKFYGKYKFQIIAMTNWSIATATWLVFVICLERLIIIKYPLSVRKQAKFFTPRNVVTIIVVTTFILTSYNHVSHACAEKLFCNGTQYHVACLGIDSERWFRNEPNPNSEFMKSVVRVAPQVNAIFVVLIPVVLVIIFNVMLILTLRQRTKLFEPSKTIRGDSQFTQLQSKTEHKVTITVTAIVTCFTITQSPSAFVTFLSSYVHRDWVTLSAICTILVVLGKALNFVLFCLSSASFRQRLLMQTKQGILRKSTRTVSMVTSSTVVVDSLPESRKKSRVAMEMIERRTSASSCLVGGNRADRTHRANSSQSMIGERMPLKEFRRGTSFV</sequence>
<protein>
    <recommendedName>
        <fullName>Putative G-protein coupled receptor F59B2.13</fullName>
    </recommendedName>
</protein>
<comment type="subcellular location">
    <subcellularLocation>
        <location evidence="3">Cell membrane</location>
        <topology evidence="3">Multi-pass membrane protein</topology>
    </subcellularLocation>
</comment>
<comment type="similarity">
    <text evidence="2">Belongs to the G-protein coupled receptor 1 family.</text>
</comment>
<gene>
    <name type="ORF">F59B2.13</name>
</gene>
<organism>
    <name type="scientific">Caenorhabditis elegans</name>
    <dbReference type="NCBI Taxonomy" id="6239"/>
    <lineage>
        <taxon>Eukaryota</taxon>
        <taxon>Metazoa</taxon>
        <taxon>Ecdysozoa</taxon>
        <taxon>Nematoda</taxon>
        <taxon>Chromadorea</taxon>
        <taxon>Rhabditida</taxon>
        <taxon>Rhabditina</taxon>
        <taxon>Rhabditomorpha</taxon>
        <taxon>Rhabditoidea</taxon>
        <taxon>Rhabditidae</taxon>
        <taxon>Peloderinae</taxon>
        <taxon>Caenorhabditis</taxon>
    </lineage>
</organism>
<keyword id="KW-1003">Cell membrane</keyword>
<keyword id="KW-0297">G-protein coupled receptor</keyword>
<keyword id="KW-0325">Glycoprotein</keyword>
<keyword id="KW-0472">Membrane</keyword>
<keyword id="KW-0675">Receptor</keyword>
<keyword id="KW-1185">Reference proteome</keyword>
<keyword id="KW-0807">Transducer</keyword>
<keyword id="KW-0812">Transmembrane</keyword>
<keyword id="KW-1133">Transmembrane helix</keyword>
<evidence type="ECO:0000255" key="1"/>
<evidence type="ECO:0000255" key="2">
    <source>
        <dbReference type="PROSITE-ProRule" id="PRU00521"/>
    </source>
</evidence>
<evidence type="ECO:0000305" key="3"/>
<proteinExistence type="inferred from homology"/>
<name>YMJC_CAEEL</name>
<reference key="1">
    <citation type="journal article" date="1994" name="Nature">
        <title>2.2 Mb of contiguous nucleotide sequence from chromosome III of C. elegans.</title>
        <authorList>
            <person name="Wilson R."/>
            <person name="Ainscough R."/>
            <person name="Anderson K."/>
            <person name="Baynes C."/>
            <person name="Berks M."/>
            <person name="Bonfield J."/>
            <person name="Burton J."/>
            <person name="Connell M."/>
            <person name="Copsey T."/>
            <person name="Cooper J."/>
            <person name="Coulson A."/>
            <person name="Craxton M."/>
            <person name="Dear S."/>
            <person name="Du Z."/>
            <person name="Durbin R."/>
            <person name="Favello A."/>
            <person name="Fraser A."/>
            <person name="Fulton L."/>
            <person name="Gardner A."/>
            <person name="Green P."/>
            <person name="Hawkins T."/>
            <person name="Hillier L."/>
            <person name="Jier M."/>
            <person name="Johnston L."/>
            <person name="Jones M."/>
            <person name="Kershaw J."/>
            <person name="Kirsten J."/>
            <person name="Laisster N."/>
            <person name="Latreille P."/>
            <person name="Lightning J."/>
            <person name="Lloyd C."/>
            <person name="Mortimore B."/>
            <person name="O'Callaghan M."/>
            <person name="Parsons J."/>
            <person name="Percy C."/>
            <person name="Rifken L."/>
            <person name="Roopra A."/>
            <person name="Saunders D."/>
            <person name="Shownkeen R."/>
            <person name="Sims M."/>
            <person name="Smaldon N."/>
            <person name="Smith A."/>
            <person name="Smith M."/>
            <person name="Sonnhammer E."/>
            <person name="Staden R."/>
            <person name="Sulston J."/>
            <person name="Thierry-Mieg J."/>
            <person name="Thomas K."/>
            <person name="Vaudin M."/>
            <person name="Vaughan K."/>
            <person name="Waterston R."/>
            <person name="Watson A."/>
            <person name="Weinstock L."/>
            <person name="Wilkinson-Sproat J."/>
            <person name="Wohldman P."/>
        </authorList>
    </citation>
    <scope>NUCLEOTIDE SEQUENCE [LARGE SCALE GENOMIC DNA]</scope>
    <source>
        <strain>Bristol N2</strain>
    </source>
</reference>
<reference key="2">
    <citation type="journal article" date="1998" name="Science">
        <title>Genome sequence of the nematode C. elegans: a platform for investigating biology.</title>
        <authorList>
            <consortium name="The C. elegans sequencing consortium"/>
        </authorList>
    </citation>
    <scope>NUCLEOTIDE SEQUENCE [LARGE SCALE GENOMIC DNA]</scope>
    <source>
        <strain>Bristol N2</strain>
    </source>
</reference>
<dbReference type="EMBL" id="Z11505">
    <property type="protein sequence ID" value="CAA77580.3"/>
    <property type="molecule type" value="Genomic_DNA"/>
</dbReference>
<dbReference type="PIR" id="H88545">
    <property type="entry name" value="H88545"/>
</dbReference>
<dbReference type="PIR" id="S31133">
    <property type="entry name" value="S31133"/>
</dbReference>
<dbReference type="RefSeq" id="NP_498999.3">
    <property type="nucleotide sequence ID" value="NM_066598.7"/>
</dbReference>
<dbReference type="SMR" id="P34488"/>
<dbReference type="STRING" id="6239.F59B2.13a.1"/>
<dbReference type="PaxDb" id="6239-F59B2.13"/>
<dbReference type="EnsemblMetazoa" id="F59B2.13a.1">
    <property type="protein sequence ID" value="F59B2.13a.1"/>
    <property type="gene ID" value="WBGene00010315"/>
</dbReference>
<dbReference type="GeneID" id="186597"/>
<dbReference type="KEGG" id="cel:CELE_F59B2.13"/>
<dbReference type="UCSC" id="F59B2.13">
    <property type="organism name" value="c. elegans"/>
</dbReference>
<dbReference type="AGR" id="WB:WBGene00010315"/>
<dbReference type="CTD" id="186597"/>
<dbReference type="WormBase" id="F59B2.13a">
    <property type="protein sequence ID" value="CE41671"/>
    <property type="gene ID" value="WBGene00010315"/>
</dbReference>
<dbReference type="eggNOG" id="ENOG502TFXB">
    <property type="taxonomic scope" value="Eukaryota"/>
</dbReference>
<dbReference type="HOGENOM" id="CLU_009579_24_3_1"/>
<dbReference type="InParanoid" id="P34488"/>
<dbReference type="OMA" id="NHVSHAC"/>
<dbReference type="OrthoDB" id="10011262at2759"/>
<dbReference type="PhylomeDB" id="P34488"/>
<dbReference type="PRO" id="PR:P34488"/>
<dbReference type="Proteomes" id="UP000001940">
    <property type="component" value="Chromosome III"/>
</dbReference>
<dbReference type="Bgee" id="WBGene00010315">
    <property type="expression patterns" value="Expressed in nervous system and 14 other cell types or tissues"/>
</dbReference>
<dbReference type="ExpressionAtlas" id="P34488">
    <property type="expression patterns" value="baseline and differential"/>
</dbReference>
<dbReference type="GO" id="GO:0005886">
    <property type="term" value="C:plasma membrane"/>
    <property type="evidence" value="ECO:0007669"/>
    <property type="project" value="UniProtKB-SubCell"/>
</dbReference>
<dbReference type="GO" id="GO:0008528">
    <property type="term" value="F:G protein-coupled peptide receptor activity"/>
    <property type="evidence" value="ECO:0007669"/>
    <property type="project" value="InterPro"/>
</dbReference>
<dbReference type="CDD" id="cd14978">
    <property type="entry name" value="7tmA_FMRFamide_R-like"/>
    <property type="match status" value="1"/>
</dbReference>
<dbReference type="Gene3D" id="1.20.1070.10">
    <property type="entry name" value="Rhodopsin 7-helix transmembrane proteins"/>
    <property type="match status" value="1"/>
</dbReference>
<dbReference type="InterPro" id="IPR019427">
    <property type="entry name" value="7TM_GPCR_serpentine_rcpt_Srw"/>
</dbReference>
<dbReference type="InterPro" id="IPR000276">
    <property type="entry name" value="GPCR_Rhodpsn"/>
</dbReference>
<dbReference type="InterPro" id="IPR017452">
    <property type="entry name" value="GPCR_Rhodpsn_7TM"/>
</dbReference>
<dbReference type="PANTHER" id="PTHR46895:SF3">
    <property type="entry name" value="G-PROTEIN COUPLED RECEPTOR F59B2.13-RELATED"/>
    <property type="match status" value="1"/>
</dbReference>
<dbReference type="PANTHER" id="PTHR46895">
    <property type="entry name" value="PROTEIN CBG20548-RELATED"/>
    <property type="match status" value="1"/>
</dbReference>
<dbReference type="Pfam" id="PF10324">
    <property type="entry name" value="7TM_GPCR_Srw"/>
    <property type="match status" value="1"/>
</dbReference>
<dbReference type="PRINTS" id="PR00237">
    <property type="entry name" value="GPCRRHODOPSN"/>
</dbReference>
<dbReference type="SUPFAM" id="SSF81321">
    <property type="entry name" value="Family A G protein-coupled receptor-like"/>
    <property type="match status" value="1"/>
</dbReference>
<dbReference type="PROSITE" id="PS50262">
    <property type="entry name" value="G_PROTEIN_RECEP_F1_2"/>
    <property type="match status" value="1"/>
</dbReference>